<organism>
    <name type="scientific">Bacillus subtilis (strain 168)</name>
    <dbReference type="NCBI Taxonomy" id="224308"/>
    <lineage>
        <taxon>Bacteria</taxon>
        <taxon>Bacillati</taxon>
        <taxon>Bacillota</taxon>
        <taxon>Bacilli</taxon>
        <taxon>Bacillales</taxon>
        <taxon>Bacillaceae</taxon>
        <taxon>Bacillus</taxon>
    </lineage>
</organism>
<name>ISP1_BACSU</name>
<feature type="propeptide" id="PRO_0000027038">
    <location>
        <begin position="1"/>
        <end position="17"/>
    </location>
</feature>
<feature type="chain" id="PRO_0000027039" description="Major intracellular serine protease">
    <location>
        <begin position="18"/>
        <end position="319"/>
    </location>
</feature>
<feature type="domain" description="Peptidase S8" evidence="1">
    <location>
        <begin position="23"/>
        <end position="307"/>
    </location>
</feature>
<feature type="active site" description="Charge relay system" evidence="1">
    <location>
        <position position="50"/>
    </location>
</feature>
<feature type="active site" description="Charge relay system" evidence="1">
    <location>
        <position position="87"/>
    </location>
</feature>
<feature type="active site" description="Charge relay system" evidence="1">
    <location>
        <position position="246"/>
    </location>
</feature>
<feature type="sequence conflict" description="In Ref. 1; AAA22557." evidence="3" ref="1">
    <original>T</original>
    <variation>S</variation>
    <location>
        <position position="71"/>
    </location>
</feature>
<feature type="sequence conflict" description="In Ref. 1; AAA22557." evidence="3" ref="1">
    <original>K</original>
    <variation>E</variation>
    <location>
        <position position="160"/>
    </location>
</feature>
<gene>
    <name type="primary">isp</name>
    <name type="synonym">ispA</name>
    <name type="ordered locus">BSU13190</name>
</gene>
<accession>P11018</accession>
<accession>O34477</accession>
<proteinExistence type="evidence at protein level"/>
<evidence type="ECO:0000255" key="1">
    <source>
        <dbReference type="PROSITE-ProRule" id="PRU01240"/>
    </source>
</evidence>
<evidence type="ECO:0000269" key="2">
    <source>
    </source>
</evidence>
<evidence type="ECO:0000305" key="3"/>
<dbReference type="EC" id="3.4.21.-"/>
<dbReference type="EMBL" id="M13760">
    <property type="protein sequence ID" value="AAA22557.1"/>
    <property type="molecule type" value="Genomic_DNA"/>
</dbReference>
<dbReference type="EMBL" id="AJ002571">
    <property type="protein sequence ID" value="CAA05598.1"/>
    <property type="molecule type" value="Genomic_DNA"/>
</dbReference>
<dbReference type="EMBL" id="AL009126">
    <property type="protein sequence ID" value="CAB13176.1"/>
    <property type="molecule type" value="Genomic_DNA"/>
</dbReference>
<dbReference type="PIR" id="I39866">
    <property type="entry name" value="I39866"/>
</dbReference>
<dbReference type="RefSeq" id="NP_389202.1">
    <property type="nucleotide sequence ID" value="NC_000964.3"/>
</dbReference>
<dbReference type="RefSeq" id="WP_003232562.1">
    <property type="nucleotide sequence ID" value="NZ_OZ025638.1"/>
</dbReference>
<dbReference type="SMR" id="P11018"/>
<dbReference type="FunCoup" id="P11018">
    <property type="interactions" value="153"/>
</dbReference>
<dbReference type="STRING" id="224308.BSU13190"/>
<dbReference type="MEROPS" id="S08.030"/>
<dbReference type="PaxDb" id="224308-BSU13190"/>
<dbReference type="EnsemblBacteria" id="CAB13176">
    <property type="protein sequence ID" value="CAB13176"/>
    <property type="gene ID" value="BSU_13190"/>
</dbReference>
<dbReference type="GeneID" id="939934"/>
<dbReference type="KEGG" id="bsu:BSU13190"/>
<dbReference type="PATRIC" id="fig|224308.179.peg.1433"/>
<dbReference type="eggNOG" id="COG1404">
    <property type="taxonomic scope" value="Bacteria"/>
</dbReference>
<dbReference type="InParanoid" id="P11018"/>
<dbReference type="OrthoDB" id="9798386at2"/>
<dbReference type="PhylomeDB" id="P11018"/>
<dbReference type="BioCyc" id="BSUB:BSU13190-MONOMER"/>
<dbReference type="Proteomes" id="UP000001570">
    <property type="component" value="Chromosome"/>
</dbReference>
<dbReference type="GO" id="GO:0005737">
    <property type="term" value="C:cytoplasm"/>
    <property type="evidence" value="ECO:0007669"/>
    <property type="project" value="UniProtKB-SubCell"/>
</dbReference>
<dbReference type="GO" id="GO:0004252">
    <property type="term" value="F:serine-type endopeptidase activity"/>
    <property type="evidence" value="ECO:0007669"/>
    <property type="project" value="InterPro"/>
</dbReference>
<dbReference type="GO" id="GO:0006508">
    <property type="term" value="P:proteolysis"/>
    <property type="evidence" value="ECO:0007669"/>
    <property type="project" value="UniProtKB-KW"/>
</dbReference>
<dbReference type="CDD" id="cd07477">
    <property type="entry name" value="Peptidases_S8_Subtilisin_subset"/>
    <property type="match status" value="1"/>
</dbReference>
<dbReference type="Gene3D" id="3.40.50.200">
    <property type="entry name" value="Peptidase S8/S53 domain"/>
    <property type="match status" value="1"/>
</dbReference>
<dbReference type="InterPro" id="IPR000209">
    <property type="entry name" value="Peptidase_S8/S53_dom"/>
</dbReference>
<dbReference type="InterPro" id="IPR036852">
    <property type="entry name" value="Peptidase_S8/S53_dom_sf"/>
</dbReference>
<dbReference type="InterPro" id="IPR051048">
    <property type="entry name" value="Peptidase_S8/S53_subtilisin"/>
</dbReference>
<dbReference type="InterPro" id="IPR023827">
    <property type="entry name" value="Peptidase_S8_Asp-AS"/>
</dbReference>
<dbReference type="InterPro" id="IPR022398">
    <property type="entry name" value="Peptidase_S8_His-AS"/>
</dbReference>
<dbReference type="InterPro" id="IPR023828">
    <property type="entry name" value="Peptidase_S8_Ser-AS"/>
</dbReference>
<dbReference type="InterPro" id="IPR015500">
    <property type="entry name" value="Peptidase_S8_subtilisin-rel"/>
</dbReference>
<dbReference type="InterPro" id="IPR034202">
    <property type="entry name" value="Subtilisin_Carlsberg-like"/>
</dbReference>
<dbReference type="PANTHER" id="PTHR43399:SF4">
    <property type="entry name" value="CELL WALL-ASSOCIATED PROTEASE"/>
    <property type="match status" value="1"/>
</dbReference>
<dbReference type="PANTHER" id="PTHR43399">
    <property type="entry name" value="SUBTILISIN-RELATED"/>
    <property type="match status" value="1"/>
</dbReference>
<dbReference type="Pfam" id="PF00082">
    <property type="entry name" value="Peptidase_S8"/>
    <property type="match status" value="1"/>
</dbReference>
<dbReference type="PRINTS" id="PR00723">
    <property type="entry name" value="SUBTILISIN"/>
</dbReference>
<dbReference type="SUPFAM" id="SSF52743">
    <property type="entry name" value="Subtilisin-like"/>
    <property type="match status" value="1"/>
</dbReference>
<dbReference type="PROSITE" id="PS51892">
    <property type="entry name" value="SUBTILASE"/>
    <property type="match status" value="1"/>
</dbReference>
<dbReference type="PROSITE" id="PS00136">
    <property type="entry name" value="SUBTILASE_ASP"/>
    <property type="match status" value="1"/>
</dbReference>
<dbReference type="PROSITE" id="PS00137">
    <property type="entry name" value="SUBTILASE_HIS"/>
    <property type="match status" value="1"/>
</dbReference>
<dbReference type="PROSITE" id="PS00138">
    <property type="entry name" value="SUBTILASE_SER"/>
    <property type="match status" value="1"/>
</dbReference>
<protein>
    <recommendedName>
        <fullName>Major intracellular serine protease</fullName>
        <ecNumber>3.4.21.-</ecNumber>
    </recommendedName>
    <alternativeName>
        <fullName>ISP-1</fullName>
    </alternativeName>
</protein>
<sequence length="319" mass="33849">MNGEIRLIPYVTNEQIMDVNELPEGIKVIKAPEMWAKGVKGKNIKVAVLDTGCDTSHPDLKNQIIGGKNFTDDDGGKEDAISDYNGHGTHVAGTIAANDSNGGIAGVAPEASLLIVKVLGGENGSGQYEWIINGINYAVEQKVDIISMSLGGPSDVPELKEAVKNAVKNGVLVVCAAGNEGDGDERTEELSYPAAYNEVIAVGSVSVARELSEFSNANKEIDLVAPGENILSTLPNKKYGKLTGTSMAAPHVSGALALIKSYEEESFQRKLSESEVFAQLIRRTLPLDIAKTLAGNGFLYLTAPDELAEKAEQSHLLTL</sequence>
<reference key="1">
    <citation type="journal article" date="1986" name="J. Bacteriol.">
        <title>Cloning and sequencing of the major intracellular serine protease gene of Bacillus subtilis.</title>
        <authorList>
            <person name="Koide Y."/>
            <person name="Nakamura A."/>
            <person name="Uozumi T."/>
            <person name="Beppu T."/>
        </authorList>
    </citation>
    <scope>NUCLEOTIDE SEQUENCE [GENOMIC DNA]</scope>
    <scope>PARTIAL PROTEIN SEQUENCE</scope>
    <scope>SUBUNIT</scope>
    <scope>SUBCELLULAR LOCATION</scope>
    <source>
        <strain>NBRC 3013</strain>
    </source>
</reference>
<reference key="2">
    <citation type="submission" date="1997-11" db="EMBL/GenBank/DDBJ databases">
        <title>Sequence of the Bacillus subtilis genome between xlyA and ykoR.</title>
        <authorList>
            <person name="Devine K.M."/>
        </authorList>
    </citation>
    <scope>NUCLEOTIDE SEQUENCE [GENOMIC DNA]</scope>
    <source>
        <strain>168</strain>
    </source>
</reference>
<reference key="3">
    <citation type="journal article" date="1997" name="Nature">
        <title>The complete genome sequence of the Gram-positive bacterium Bacillus subtilis.</title>
        <authorList>
            <person name="Kunst F."/>
            <person name="Ogasawara N."/>
            <person name="Moszer I."/>
            <person name="Albertini A.M."/>
            <person name="Alloni G."/>
            <person name="Azevedo V."/>
            <person name="Bertero M.G."/>
            <person name="Bessieres P."/>
            <person name="Bolotin A."/>
            <person name="Borchert S."/>
            <person name="Borriss R."/>
            <person name="Boursier L."/>
            <person name="Brans A."/>
            <person name="Braun M."/>
            <person name="Brignell S.C."/>
            <person name="Bron S."/>
            <person name="Brouillet S."/>
            <person name="Bruschi C.V."/>
            <person name="Caldwell B."/>
            <person name="Capuano V."/>
            <person name="Carter N.M."/>
            <person name="Choi S.-K."/>
            <person name="Codani J.-J."/>
            <person name="Connerton I.F."/>
            <person name="Cummings N.J."/>
            <person name="Daniel R.A."/>
            <person name="Denizot F."/>
            <person name="Devine K.M."/>
            <person name="Duesterhoeft A."/>
            <person name="Ehrlich S.D."/>
            <person name="Emmerson P.T."/>
            <person name="Entian K.-D."/>
            <person name="Errington J."/>
            <person name="Fabret C."/>
            <person name="Ferrari E."/>
            <person name="Foulger D."/>
            <person name="Fritz C."/>
            <person name="Fujita M."/>
            <person name="Fujita Y."/>
            <person name="Fuma S."/>
            <person name="Galizzi A."/>
            <person name="Galleron N."/>
            <person name="Ghim S.-Y."/>
            <person name="Glaser P."/>
            <person name="Goffeau A."/>
            <person name="Golightly E.J."/>
            <person name="Grandi G."/>
            <person name="Guiseppi G."/>
            <person name="Guy B.J."/>
            <person name="Haga K."/>
            <person name="Haiech J."/>
            <person name="Harwood C.R."/>
            <person name="Henaut A."/>
            <person name="Hilbert H."/>
            <person name="Holsappel S."/>
            <person name="Hosono S."/>
            <person name="Hullo M.-F."/>
            <person name="Itaya M."/>
            <person name="Jones L.-M."/>
            <person name="Joris B."/>
            <person name="Karamata D."/>
            <person name="Kasahara Y."/>
            <person name="Klaerr-Blanchard M."/>
            <person name="Klein C."/>
            <person name="Kobayashi Y."/>
            <person name="Koetter P."/>
            <person name="Koningstein G."/>
            <person name="Krogh S."/>
            <person name="Kumano M."/>
            <person name="Kurita K."/>
            <person name="Lapidus A."/>
            <person name="Lardinois S."/>
            <person name="Lauber J."/>
            <person name="Lazarevic V."/>
            <person name="Lee S.-M."/>
            <person name="Levine A."/>
            <person name="Liu H."/>
            <person name="Masuda S."/>
            <person name="Mauel C."/>
            <person name="Medigue C."/>
            <person name="Medina N."/>
            <person name="Mellado R.P."/>
            <person name="Mizuno M."/>
            <person name="Moestl D."/>
            <person name="Nakai S."/>
            <person name="Noback M."/>
            <person name="Noone D."/>
            <person name="O'Reilly M."/>
            <person name="Ogawa K."/>
            <person name="Ogiwara A."/>
            <person name="Oudega B."/>
            <person name="Park S.-H."/>
            <person name="Parro V."/>
            <person name="Pohl T.M."/>
            <person name="Portetelle D."/>
            <person name="Porwollik S."/>
            <person name="Prescott A.M."/>
            <person name="Presecan E."/>
            <person name="Pujic P."/>
            <person name="Purnelle B."/>
            <person name="Rapoport G."/>
            <person name="Rey M."/>
            <person name="Reynolds S."/>
            <person name="Rieger M."/>
            <person name="Rivolta C."/>
            <person name="Rocha E."/>
            <person name="Roche B."/>
            <person name="Rose M."/>
            <person name="Sadaie Y."/>
            <person name="Sato T."/>
            <person name="Scanlan E."/>
            <person name="Schleich S."/>
            <person name="Schroeter R."/>
            <person name="Scoffone F."/>
            <person name="Sekiguchi J."/>
            <person name="Sekowska A."/>
            <person name="Seror S.J."/>
            <person name="Serror P."/>
            <person name="Shin B.-S."/>
            <person name="Soldo B."/>
            <person name="Sorokin A."/>
            <person name="Tacconi E."/>
            <person name="Takagi T."/>
            <person name="Takahashi H."/>
            <person name="Takemaru K."/>
            <person name="Takeuchi M."/>
            <person name="Tamakoshi A."/>
            <person name="Tanaka T."/>
            <person name="Terpstra P."/>
            <person name="Tognoni A."/>
            <person name="Tosato V."/>
            <person name="Uchiyama S."/>
            <person name="Vandenbol M."/>
            <person name="Vannier F."/>
            <person name="Vassarotti A."/>
            <person name="Viari A."/>
            <person name="Wambutt R."/>
            <person name="Wedler E."/>
            <person name="Wedler H."/>
            <person name="Weitzenegger T."/>
            <person name="Winters P."/>
            <person name="Wipat A."/>
            <person name="Yamamoto H."/>
            <person name="Yamane K."/>
            <person name="Yasumoto K."/>
            <person name="Yata K."/>
            <person name="Yoshida K."/>
            <person name="Yoshikawa H.-F."/>
            <person name="Zumstein E."/>
            <person name="Yoshikawa H."/>
            <person name="Danchin A."/>
        </authorList>
    </citation>
    <scope>NUCLEOTIDE SEQUENCE [LARGE SCALE GENOMIC DNA]</scope>
    <source>
        <strain>168</strain>
    </source>
</reference>
<keyword id="KW-0963">Cytoplasm</keyword>
<keyword id="KW-0903">Direct protein sequencing</keyword>
<keyword id="KW-0378">Hydrolase</keyword>
<keyword id="KW-0645">Protease</keyword>
<keyword id="KW-1185">Reference proteome</keyword>
<keyword id="KW-0720">Serine protease</keyword>
<keyword id="KW-0865">Zymogen</keyword>
<comment type="function">
    <text>Major intracellular protease produced by Bacillus subtilis.</text>
</comment>
<comment type="subunit">
    <text evidence="2">Homodimer.</text>
</comment>
<comment type="subcellular location">
    <subcellularLocation>
        <location evidence="2">Cytoplasm</location>
    </subcellularLocation>
</comment>
<comment type="similarity">
    <text evidence="3">Belongs to the peptidase S8 family.</text>
</comment>